<protein>
    <recommendedName>
        <fullName evidence="1">Chorismate synthase</fullName>
        <shortName evidence="1">CS</shortName>
        <ecNumber evidence="1">4.2.3.5</ecNumber>
    </recommendedName>
    <alternativeName>
        <fullName evidence="1">5-enolpyruvylshikimate-3-phosphate phospholyase</fullName>
    </alternativeName>
</protein>
<comment type="function">
    <text evidence="1">Catalyzes the anti-1,4-elimination of the C-3 phosphate and the C-6 proR hydrogen from 5-enolpyruvylshikimate-3-phosphate (EPSP) to yield chorismate, which is the branch point compound that serves as the starting substrate for the three terminal pathways of aromatic amino acid biosynthesis. This reaction introduces a second double bond into the aromatic ring system.</text>
</comment>
<comment type="catalytic activity">
    <reaction evidence="1">
        <text>5-O-(1-carboxyvinyl)-3-phosphoshikimate = chorismate + phosphate</text>
        <dbReference type="Rhea" id="RHEA:21020"/>
        <dbReference type="ChEBI" id="CHEBI:29748"/>
        <dbReference type="ChEBI" id="CHEBI:43474"/>
        <dbReference type="ChEBI" id="CHEBI:57701"/>
        <dbReference type="EC" id="4.2.3.5"/>
    </reaction>
</comment>
<comment type="cofactor">
    <cofactor evidence="1">
        <name>FMNH2</name>
        <dbReference type="ChEBI" id="CHEBI:57618"/>
    </cofactor>
    <text evidence="1">Reduced FMN (FMNH(2)).</text>
</comment>
<comment type="pathway">
    <text evidence="1">Metabolic intermediate biosynthesis; chorismate biosynthesis; chorismate from D-erythrose 4-phosphate and phosphoenolpyruvate: step 7/7.</text>
</comment>
<comment type="subunit">
    <text evidence="1">Homotetramer.</text>
</comment>
<comment type="similarity">
    <text evidence="1">Belongs to the chorismate synthase family.</text>
</comment>
<name>AROC_PROM0</name>
<keyword id="KW-0028">Amino-acid biosynthesis</keyword>
<keyword id="KW-0057">Aromatic amino acid biosynthesis</keyword>
<keyword id="KW-0274">FAD</keyword>
<keyword id="KW-0285">Flavoprotein</keyword>
<keyword id="KW-0288">FMN</keyword>
<keyword id="KW-0456">Lyase</keyword>
<keyword id="KW-0521">NADP</keyword>
<keyword id="KW-1185">Reference proteome</keyword>
<sequence>MSSSFGKIFRVSTFGESHGGAVGVILDGCPPKLKIDINLIQNELDRRRPGQSDITTPRNEEDKIEILSGIKEGLTLGTPIAMLVRNKDQRPADYNNMEQVFRPSHADGTYHLKYGIQASSGGGRASARETIGRVAAGAVAKQLLKTFCNTEILSWVKRIHDIDSDINKEKISLKKIDSNIVRCPDEKVSTEMIERIKELKRQGDSCGGVIECLVRNVPSGLGMPVFDKLEADLAKALMSLPATKGFEIGSGFSGTYLKGSEHNDSFIKSDDSSKLRTTSNNSGGIQGGISNGENIEMKIAFKPTATIGKEQKTVNAEGKEVLMKAKGRHDPCVLPRAVPMVDAMVALVLADHLLLNHAQCDLINN</sequence>
<accession>A3PAU4</accession>
<gene>
    <name evidence="1" type="primary">aroC</name>
    <name type="ordered locus">P9301_02461</name>
</gene>
<proteinExistence type="inferred from homology"/>
<feature type="chain" id="PRO_1000022521" description="Chorismate synthase">
    <location>
        <begin position="1"/>
        <end position="365"/>
    </location>
</feature>
<feature type="region of interest" description="Disordered" evidence="2">
    <location>
        <begin position="266"/>
        <end position="290"/>
    </location>
</feature>
<feature type="binding site" evidence="1">
    <location>
        <position position="47"/>
    </location>
    <ligand>
        <name>NADP(+)</name>
        <dbReference type="ChEBI" id="CHEBI:58349"/>
    </ligand>
</feature>
<feature type="binding site" evidence="1">
    <location>
        <begin position="124"/>
        <end position="126"/>
    </location>
    <ligand>
        <name>FMN</name>
        <dbReference type="ChEBI" id="CHEBI:58210"/>
    </ligand>
</feature>
<feature type="binding site" evidence="1">
    <location>
        <position position="287"/>
    </location>
    <ligand>
        <name>FMN</name>
        <dbReference type="ChEBI" id="CHEBI:58210"/>
    </ligand>
</feature>
<feature type="binding site" evidence="1">
    <location>
        <begin position="302"/>
        <end position="306"/>
    </location>
    <ligand>
        <name>FMN</name>
        <dbReference type="ChEBI" id="CHEBI:58210"/>
    </ligand>
</feature>
<feature type="binding site" evidence="1">
    <location>
        <position position="328"/>
    </location>
    <ligand>
        <name>FMN</name>
        <dbReference type="ChEBI" id="CHEBI:58210"/>
    </ligand>
</feature>
<organism>
    <name type="scientific">Prochlorococcus marinus (strain MIT 9301)</name>
    <dbReference type="NCBI Taxonomy" id="167546"/>
    <lineage>
        <taxon>Bacteria</taxon>
        <taxon>Bacillati</taxon>
        <taxon>Cyanobacteriota</taxon>
        <taxon>Cyanophyceae</taxon>
        <taxon>Synechococcales</taxon>
        <taxon>Prochlorococcaceae</taxon>
        <taxon>Prochlorococcus</taxon>
    </lineage>
</organism>
<evidence type="ECO:0000255" key="1">
    <source>
        <dbReference type="HAMAP-Rule" id="MF_00300"/>
    </source>
</evidence>
<evidence type="ECO:0000256" key="2">
    <source>
        <dbReference type="SAM" id="MobiDB-lite"/>
    </source>
</evidence>
<dbReference type="EC" id="4.2.3.5" evidence="1"/>
<dbReference type="EMBL" id="CP000576">
    <property type="protein sequence ID" value="ABO16869.1"/>
    <property type="molecule type" value="Genomic_DNA"/>
</dbReference>
<dbReference type="RefSeq" id="WP_011862267.1">
    <property type="nucleotide sequence ID" value="NC_009091.1"/>
</dbReference>
<dbReference type="SMR" id="A3PAU4"/>
<dbReference type="STRING" id="167546.P9301_02461"/>
<dbReference type="KEGG" id="pmg:P9301_02461"/>
<dbReference type="eggNOG" id="COG0082">
    <property type="taxonomic scope" value="Bacteria"/>
</dbReference>
<dbReference type="HOGENOM" id="CLU_034547_0_1_3"/>
<dbReference type="OrthoDB" id="9771806at2"/>
<dbReference type="UniPathway" id="UPA00053">
    <property type="reaction ID" value="UER00090"/>
</dbReference>
<dbReference type="Proteomes" id="UP000001430">
    <property type="component" value="Chromosome"/>
</dbReference>
<dbReference type="GO" id="GO:0005829">
    <property type="term" value="C:cytosol"/>
    <property type="evidence" value="ECO:0007669"/>
    <property type="project" value="TreeGrafter"/>
</dbReference>
<dbReference type="GO" id="GO:0004107">
    <property type="term" value="F:chorismate synthase activity"/>
    <property type="evidence" value="ECO:0007669"/>
    <property type="project" value="UniProtKB-UniRule"/>
</dbReference>
<dbReference type="GO" id="GO:0010181">
    <property type="term" value="F:FMN binding"/>
    <property type="evidence" value="ECO:0007669"/>
    <property type="project" value="TreeGrafter"/>
</dbReference>
<dbReference type="GO" id="GO:0008652">
    <property type="term" value="P:amino acid biosynthetic process"/>
    <property type="evidence" value="ECO:0007669"/>
    <property type="project" value="UniProtKB-KW"/>
</dbReference>
<dbReference type="GO" id="GO:0009073">
    <property type="term" value="P:aromatic amino acid family biosynthetic process"/>
    <property type="evidence" value="ECO:0007669"/>
    <property type="project" value="UniProtKB-KW"/>
</dbReference>
<dbReference type="GO" id="GO:0009423">
    <property type="term" value="P:chorismate biosynthetic process"/>
    <property type="evidence" value="ECO:0007669"/>
    <property type="project" value="UniProtKB-UniRule"/>
</dbReference>
<dbReference type="CDD" id="cd07304">
    <property type="entry name" value="Chorismate_synthase"/>
    <property type="match status" value="1"/>
</dbReference>
<dbReference type="FunFam" id="3.60.150.10:FF:000003">
    <property type="entry name" value="Chorismate synthase"/>
    <property type="match status" value="1"/>
</dbReference>
<dbReference type="Gene3D" id="3.60.150.10">
    <property type="entry name" value="Chorismate synthase AroC"/>
    <property type="match status" value="1"/>
</dbReference>
<dbReference type="HAMAP" id="MF_00300">
    <property type="entry name" value="Chorismate_synth"/>
    <property type="match status" value="1"/>
</dbReference>
<dbReference type="InterPro" id="IPR000453">
    <property type="entry name" value="Chorismate_synth"/>
</dbReference>
<dbReference type="InterPro" id="IPR035904">
    <property type="entry name" value="Chorismate_synth_AroC_sf"/>
</dbReference>
<dbReference type="InterPro" id="IPR020541">
    <property type="entry name" value="Chorismate_synthase_CS"/>
</dbReference>
<dbReference type="NCBIfam" id="TIGR00033">
    <property type="entry name" value="aroC"/>
    <property type="match status" value="1"/>
</dbReference>
<dbReference type="NCBIfam" id="NF003793">
    <property type="entry name" value="PRK05382.1"/>
    <property type="match status" value="1"/>
</dbReference>
<dbReference type="PANTHER" id="PTHR21085">
    <property type="entry name" value="CHORISMATE SYNTHASE"/>
    <property type="match status" value="1"/>
</dbReference>
<dbReference type="PANTHER" id="PTHR21085:SF0">
    <property type="entry name" value="CHORISMATE SYNTHASE"/>
    <property type="match status" value="1"/>
</dbReference>
<dbReference type="Pfam" id="PF01264">
    <property type="entry name" value="Chorismate_synt"/>
    <property type="match status" value="1"/>
</dbReference>
<dbReference type="PIRSF" id="PIRSF001456">
    <property type="entry name" value="Chorismate_synth"/>
    <property type="match status" value="1"/>
</dbReference>
<dbReference type="SUPFAM" id="SSF103263">
    <property type="entry name" value="Chorismate synthase, AroC"/>
    <property type="match status" value="1"/>
</dbReference>
<dbReference type="PROSITE" id="PS00787">
    <property type="entry name" value="CHORISMATE_SYNTHASE_1"/>
    <property type="match status" value="1"/>
</dbReference>
<dbReference type="PROSITE" id="PS00788">
    <property type="entry name" value="CHORISMATE_SYNTHASE_2"/>
    <property type="match status" value="1"/>
</dbReference>
<reference key="1">
    <citation type="journal article" date="2007" name="PLoS Genet.">
        <title>Patterns and implications of gene gain and loss in the evolution of Prochlorococcus.</title>
        <authorList>
            <person name="Kettler G.C."/>
            <person name="Martiny A.C."/>
            <person name="Huang K."/>
            <person name="Zucker J."/>
            <person name="Coleman M.L."/>
            <person name="Rodrigue S."/>
            <person name="Chen F."/>
            <person name="Lapidus A."/>
            <person name="Ferriera S."/>
            <person name="Johnson J."/>
            <person name="Steglich C."/>
            <person name="Church G.M."/>
            <person name="Richardson P."/>
            <person name="Chisholm S.W."/>
        </authorList>
    </citation>
    <scope>NUCLEOTIDE SEQUENCE [LARGE SCALE GENOMIC DNA]</scope>
    <source>
        <strain>MIT 9301</strain>
    </source>
</reference>